<proteinExistence type="inferred from homology"/>
<reference key="1">
    <citation type="submission" date="2007-09" db="EMBL/GenBank/DDBJ databases">
        <title>Complete sequence of chromosome of Serratia proteamaculans 568.</title>
        <authorList>
            <consortium name="US DOE Joint Genome Institute"/>
            <person name="Copeland A."/>
            <person name="Lucas S."/>
            <person name="Lapidus A."/>
            <person name="Barry K."/>
            <person name="Glavina del Rio T."/>
            <person name="Dalin E."/>
            <person name="Tice H."/>
            <person name="Pitluck S."/>
            <person name="Chain P."/>
            <person name="Malfatti S."/>
            <person name="Shin M."/>
            <person name="Vergez L."/>
            <person name="Schmutz J."/>
            <person name="Larimer F."/>
            <person name="Land M."/>
            <person name="Hauser L."/>
            <person name="Kyrpides N."/>
            <person name="Kim E."/>
            <person name="Taghavi S."/>
            <person name="Newman L."/>
            <person name="Vangronsveld J."/>
            <person name="van der Lelie D."/>
            <person name="Richardson P."/>
        </authorList>
    </citation>
    <scope>NUCLEOTIDE SEQUENCE [LARGE SCALE GENOMIC DNA]</scope>
    <source>
        <strain>568</strain>
    </source>
</reference>
<protein>
    <recommendedName>
        <fullName evidence="1">Protein SprT</fullName>
    </recommendedName>
</protein>
<accession>A8GJ28</accession>
<name>SPRT_SERP5</name>
<sequence length="170" mass="19999">MNKARIPIALQQAVMRCLREKLQLARQHFSVEFPEPKILYQQRGTSAGTAWLQAWEIRLNPVLLMENQQPFIDEVVPHELAHLLVFRQFGRVPPHGNEWRWMMESVLQVSASRTHQFEIASVQSKTYPYRCGCQLHQLTVRRHNRVMRGESEYRCRQCGDKLKFFAGEPV</sequence>
<gene>
    <name evidence="1" type="primary">sprT</name>
    <name type="ordered locus">Spro_4023</name>
</gene>
<dbReference type="EMBL" id="CP000826">
    <property type="protein sequence ID" value="ABV43118.1"/>
    <property type="molecule type" value="Genomic_DNA"/>
</dbReference>
<dbReference type="STRING" id="399741.Spro_4023"/>
<dbReference type="KEGG" id="spe:Spro_4023"/>
<dbReference type="eggNOG" id="COG3091">
    <property type="taxonomic scope" value="Bacteria"/>
</dbReference>
<dbReference type="HOGENOM" id="CLU_113336_0_1_6"/>
<dbReference type="OrthoDB" id="267364at2"/>
<dbReference type="GO" id="GO:0005737">
    <property type="term" value="C:cytoplasm"/>
    <property type="evidence" value="ECO:0007669"/>
    <property type="project" value="UniProtKB-SubCell"/>
</dbReference>
<dbReference type="GO" id="GO:0008270">
    <property type="term" value="F:zinc ion binding"/>
    <property type="evidence" value="ECO:0007669"/>
    <property type="project" value="UniProtKB-UniRule"/>
</dbReference>
<dbReference type="GO" id="GO:0006950">
    <property type="term" value="P:response to stress"/>
    <property type="evidence" value="ECO:0007669"/>
    <property type="project" value="UniProtKB-ARBA"/>
</dbReference>
<dbReference type="HAMAP" id="MF_00746">
    <property type="entry name" value="SprT"/>
    <property type="match status" value="1"/>
</dbReference>
<dbReference type="InterPro" id="IPR006640">
    <property type="entry name" value="SprT-like_domain"/>
</dbReference>
<dbReference type="InterPro" id="IPR035240">
    <property type="entry name" value="SprT_Zn_ribbon"/>
</dbReference>
<dbReference type="InterPro" id="IPR023483">
    <property type="entry name" value="Uncharacterised_SprT"/>
</dbReference>
<dbReference type="NCBIfam" id="NF003421">
    <property type="entry name" value="PRK04860.1"/>
    <property type="match status" value="1"/>
</dbReference>
<dbReference type="PANTHER" id="PTHR38773">
    <property type="entry name" value="PROTEIN SPRT"/>
    <property type="match status" value="1"/>
</dbReference>
<dbReference type="PANTHER" id="PTHR38773:SF1">
    <property type="entry name" value="PROTEIN SPRT"/>
    <property type="match status" value="1"/>
</dbReference>
<dbReference type="Pfam" id="PF10263">
    <property type="entry name" value="SprT-like"/>
    <property type="match status" value="1"/>
</dbReference>
<dbReference type="Pfam" id="PF17283">
    <property type="entry name" value="Zn_ribbon_SprT"/>
    <property type="match status" value="1"/>
</dbReference>
<dbReference type="SMART" id="SM00731">
    <property type="entry name" value="SprT"/>
    <property type="match status" value="1"/>
</dbReference>
<dbReference type="PROSITE" id="PS00142">
    <property type="entry name" value="ZINC_PROTEASE"/>
    <property type="match status" value="1"/>
</dbReference>
<evidence type="ECO:0000255" key="1">
    <source>
        <dbReference type="HAMAP-Rule" id="MF_00746"/>
    </source>
</evidence>
<feature type="chain" id="PRO_1000062178" description="Protein SprT">
    <location>
        <begin position="1"/>
        <end position="170"/>
    </location>
</feature>
<feature type="domain" description="SprT-like" evidence="1">
    <location>
        <begin position="23"/>
        <end position="164"/>
    </location>
</feature>
<feature type="active site" evidence="1">
    <location>
        <position position="79"/>
    </location>
</feature>
<feature type="binding site" evidence="1">
    <location>
        <position position="78"/>
    </location>
    <ligand>
        <name>Zn(2+)</name>
        <dbReference type="ChEBI" id="CHEBI:29105"/>
    </ligand>
</feature>
<feature type="binding site" evidence="1">
    <location>
        <position position="82"/>
    </location>
    <ligand>
        <name>Zn(2+)</name>
        <dbReference type="ChEBI" id="CHEBI:29105"/>
    </ligand>
</feature>
<keyword id="KW-0963">Cytoplasm</keyword>
<keyword id="KW-0479">Metal-binding</keyword>
<keyword id="KW-0862">Zinc</keyword>
<organism>
    <name type="scientific">Serratia proteamaculans (strain 568)</name>
    <dbReference type="NCBI Taxonomy" id="399741"/>
    <lineage>
        <taxon>Bacteria</taxon>
        <taxon>Pseudomonadati</taxon>
        <taxon>Pseudomonadota</taxon>
        <taxon>Gammaproteobacteria</taxon>
        <taxon>Enterobacterales</taxon>
        <taxon>Yersiniaceae</taxon>
        <taxon>Serratia</taxon>
    </lineage>
</organism>
<comment type="cofactor">
    <cofactor evidence="1">
        <name>Zn(2+)</name>
        <dbReference type="ChEBI" id="CHEBI:29105"/>
    </cofactor>
    <text evidence="1">Binds 1 zinc ion.</text>
</comment>
<comment type="subcellular location">
    <subcellularLocation>
        <location evidence="1">Cytoplasm</location>
    </subcellularLocation>
</comment>
<comment type="similarity">
    <text evidence="1">Belongs to the SprT family.</text>
</comment>